<dbReference type="EC" id="2.4.1.150"/>
<dbReference type="EMBL" id="Z19550">
    <property type="protein sequence ID" value="CAA79610.1"/>
    <property type="molecule type" value="mRNA"/>
</dbReference>
<dbReference type="EMBL" id="L19659">
    <property type="protein sequence ID" value="AAA81777.1"/>
    <property type="molecule type" value="mRNA"/>
</dbReference>
<dbReference type="EMBL" id="L41607">
    <property type="protein sequence ID" value="AAA99832.1"/>
    <property type="molecule type" value="Genomic_DNA"/>
</dbReference>
<dbReference type="EMBL" id="L41605">
    <property type="protein sequence ID" value="AAA99832.1"/>
    <property type="status" value="JOINED"/>
    <property type="molecule type" value="Genomic_DNA"/>
</dbReference>
<dbReference type="EMBL" id="L41606">
    <property type="protein sequence ID" value="AAA99832.1"/>
    <property type="status" value="JOINED"/>
    <property type="molecule type" value="Genomic_DNA"/>
</dbReference>
<dbReference type="EMBL" id="AF458024">
    <property type="protein sequence ID" value="AAM73864.1"/>
    <property type="molecule type" value="mRNA"/>
</dbReference>
<dbReference type="EMBL" id="AF458025">
    <property type="protein sequence ID" value="AAM73865.1"/>
    <property type="molecule type" value="mRNA"/>
</dbReference>
<dbReference type="EMBL" id="AF458026">
    <property type="protein sequence ID" value="AAM73866.1"/>
    <property type="molecule type" value="mRNA"/>
</dbReference>
<dbReference type="EMBL" id="AB078433">
    <property type="protein sequence ID" value="BAC66782.1"/>
    <property type="molecule type" value="mRNA"/>
</dbReference>
<dbReference type="EMBL" id="AY435145">
    <property type="protein sequence ID" value="AAR95646.1"/>
    <property type="molecule type" value="mRNA"/>
</dbReference>
<dbReference type="EMBL" id="AY435146">
    <property type="protein sequence ID" value="AAR95647.1"/>
    <property type="molecule type" value="mRNA"/>
</dbReference>
<dbReference type="EMBL" id="AY435147">
    <property type="protein sequence ID" value="AAR95648.1"/>
    <property type="molecule type" value="mRNA"/>
</dbReference>
<dbReference type="EMBL" id="BX647576">
    <property type="protein sequence ID" value="CAI46081.1"/>
    <property type="molecule type" value="mRNA"/>
</dbReference>
<dbReference type="EMBL" id="AK090483">
    <property type="protein sequence ID" value="BAC03464.1"/>
    <property type="molecule type" value="mRNA"/>
</dbReference>
<dbReference type="EMBL" id="AK291767">
    <property type="protein sequence ID" value="BAF84456.1"/>
    <property type="molecule type" value="mRNA"/>
</dbReference>
<dbReference type="EMBL" id="AK313426">
    <property type="protein sequence ID" value="BAG36218.1"/>
    <property type="molecule type" value="mRNA"/>
</dbReference>
<dbReference type="EMBL" id="AK313903">
    <property type="protein sequence ID" value="BAG36626.1"/>
    <property type="molecule type" value="mRNA"/>
</dbReference>
<dbReference type="EMBL" id="AL139039">
    <property type="status" value="NOT_ANNOTATED_CDS"/>
    <property type="molecule type" value="Genomic_DNA"/>
</dbReference>
<dbReference type="EMBL" id="AL358777">
    <property type="status" value="NOT_ANNOTATED_CDS"/>
    <property type="molecule type" value="Genomic_DNA"/>
</dbReference>
<dbReference type="EMBL" id="CH471087">
    <property type="protein sequence ID" value="EAW55259.1"/>
    <property type="molecule type" value="Genomic_DNA"/>
</dbReference>
<dbReference type="EMBL" id="CH471087">
    <property type="protein sequence ID" value="EAW55260.1"/>
    <property type="molecule type" value="Genomic_DNA"/>
</dbReference>
<dbReference type="EMBL" id="CH471087">
    <property type="protein sequence ID" value="EAW55262.1"/>
    <property type="molecule type" value="Genomic_DNA"/>
</dbReference>
<dbReference type="EMBL" id="BC074802">
    <property type="protein sequence ID" value="AAH74802.1"/>
    <property type="molecule type" value="mRNA"/>
</dbReference>
<dbReference type="EMBL" id="BC074801">
    <property type="protein sequence ID" value="AAH74801.1"/>
    <property type="molecule type" value="mRNA"/>
</dbReference>
<dbReference type="EMBL" id="BC130524">
    <property type="protein sequence ID" value="AAI30525.1"/>
    <property type="molecule type" value="mRNA"/>
</dbReference>
<dbReference type="CCDS" id="CCDS34338.1">
    <molecule id="Q8N0V5-1"/>
</dbReference>
<dbReference type="CCDS" id="CCDS4512.1">
    <molecule id="Q8N0V5-2"/>
</dbReference>
<dbReference type="CCDS" id="CCDS4513.1">
    <molecule id="Q8N0V5-3"/>
</dbReference>
<dbReference type="PIR" id="A46297">
    <property type="entry name" value="A46297"/>
</dbReference>
<dbReference type="RefSeq" id="NP_001361676.1">
    <molecule id="Q8N0V5-1"/>
    <property type="nucleotide sequence ID" value="NM_001374747.1"/>
</dbReference>
<dbReference type="RefSeq" id="NP_001482.1">
    <molecule id="Q8N0V5-2"/>
    <property type="nucleotide sequence ID" value="NM_001491.3"/>
</dbReference>
<dbReference type="RefSeq" id="NP_663624.1">
    <molecule id="Q8N0V5-1"/>
    <property type="nucleotide sequence ID" value="NM_145649.5"/>
</dbReference>
<dbReference type="RefSeq" id="NP_663630.2">
    <molecule id="Q8N0V5-3"/>
    <property type="nucleotide sequence ID" value="NM_145655.4"/>
</dbReference>
<dbReference type="RefSeq" id="XP_006715115.1">
    <molecule id="Q8N0V5-1"/>
    <property type="nucleotide sequence ID" value="XM_006715052.4"/>
</dbReference>
<dbReference type="RefSeq" id="XP_054188133.1">
    <molecule id="Q8N0V5-1"/>
    <property type="nucleotide sequence ID" value="XM_054332158.1"/>
</dbReference>
<dbReference type="RefSeq" id="XP_054188134.1">
    <molecule id="Q8N0V5-2"/>
    <property type="nucleotide sequence ID" value="XM_054332159.1"/>
</dbReference>
<dbReference type="RefSeq" id="XP_054211120.1">
    <molecule id="Q8N0V5-1"/>
    <property type="nucleotide sequence ID" value="XM_054355145.1"/>
</dbReference>
<dbReference type="RefSeq" id="XP_054211121.1">
    <molecule id="Q8N0V5-2"/>
    <property type="nucleotide sequence ID" value="XM_054355146.1"/>
</dbReference>
<dbReference type="SMR" id="Q8N0V5"/>
<dbReference type="BioGRID" id="108921">
    <property type="interactions" value="50"/>
</dbReference>
<dbReference type="FunCoup" id="Q8N0V5">
    <property type="interactions" value="434"/>
</dbReference>
<dbReference type="IntAct" id="Q8N0V5">
    <property type="interactions" value="19"/>
</dbReference>
<dbReference type="STRING" id="9606.ENSP00000419411"/>
<dbReference type="CAZy" id="GT14">
    <property type="family name" value="Glycosyltransferase Family 14"/>
</dbReference>
<dbReference type="GlyCosmos" id="Q8N0V5">
    <property type="glycosylation" value="1 site, No reported glycans"/>
</dbReference>
<dbReference type="GlyGen" id="Q8N0V5">
    <property type="glycosylation" value="2 sites, 2 N-linked glycans (2 sites)"/>
</dbReference>
<dbReference type="iPTMnet" id="Q8N0V5"/>
<dbReference type="PhosphoSitePlus" id="Q8N0V5"/>
<dbReference type="BioMuta" id="GCNT2"/>
<dbReference type="DMDM" id="543887"/>
<dbReference type="jPOST" id="Q8N0V5"/>
<dbReference type="MassIVE" id="Q8N0V5"/>
<dbReference type="PaxDb" id="9606-ENSP00000368917"/>
<dbReference type="PeptideAtlas" id="Q8N0V5"/>
<dbReference type="ProteomicsDB" id="58445"/>
<dbReference type="ProteomicsDB" id="71468">
    <molecule id="Q8N0V5-1"/>
</dbReference>
<dbReference type="ProteomicsDB" id="73347"/>
<dbReference type="Antibodypedia" id="10005">
    <property type="antibodies" value="240 antibodies from 25 providers"/>
</dbReference>
<dbReference type="DNASU" id="2651"/>
<dbReference type="Ensembl" id="ENST00000265012.5">
    <molecule id="Q8N0V5-3"/>
    <property type="protein sequence ID" value="ENSP00000265012.4"/>
    <property type="gene ID" value="ENSG00000111846.20"/>
</dbReference>
<dbReference type="Ensembl" id="ENST00000316170.9">
    <molecule id="Q8N0V5-2"/>
    <property type="protein sequence ID" value="ENSP00000314844.3"/>
    <property type="gene ID" value="ENSG00000111846.20"/>
</dbReference>
<dbReference type="Ensembl" id="ENST00000379597.7">
    <molecule id="Q8N0V5-1"/>
    <property type="protein sequence ID" value="ENSP00000368917.3"/>
    <property type="gene ID" value="ENSG00000111846.20"/>
</dbReference>
<dbReference type="Ensembl" id="ENST00000495262.7">
    <molecule id="Q8N0V5-1"/>
    <property type="protein sequence ID" value="ENSP00000419411.2"/>
    <property type="gene ID" value="ENSG00000111846.20"/>
</dbReference>
<dbReference type="Ensembl" id="ENST00000642698.1">
    <molecule id="Q8N0V5-1"/>
    <property type="protein sequence ID" value="ENSP00000495911.1"/>
    <property type="gene ID" value="ENSG00000285222.3"/>
</dbReference>
<dbReference type="Ensembl" id="ENST00000643503.2">
    <molecule id="Q8N0V5-2"/>
    <property type="protein sequence ID" value="ENSP00000493918.1"/>
    <property type="gene ID" value="ENSG00000285222.3"/>
</dbReference>
<dbReference type="Ensembl" id="ENST00000644083.4">
    <molecule id="Q8N0V5-1"/>
    <property type="protein sequence ID" value="ENSP00000494927.1"/>
    <property type="gene ID" value="ENSG00000285222.3"/>
</dbReference>
<dbReference type="GeneID" id="2651"/>
<dbReference type="KEGG" id="hsa:2651"/>
<dbReference type="MANE-Select" id="ENST00000495262.7">
    <property type="protein sequence ID" value="ENSP00000419411.2"/>
    <property type="RefSeq nucleotide sequence ID" value="NM_145649.5"/>
    <property type="RefSeq protein sequence ID" value="NP_663624.1"/>
</dbReference>
<dbReference type="UCSC" id="uc010joo.4">
    <molecule id="Q8N0V5-1"/>
    <property type="organism name" value="human"/>
</dbReference>
<dbReference type="AGR" id="HGNC:4204"/>
<dbReference type="CTD" id="2651"/>
<dbReference type="DisGeNET" id="2651"/>
<dbReference type="GeneCards" id="GCNT2"/>
<dbReference type="HGNC" id="HGNC:4204">
    <property type="gene designation" value="GCNT2"/>
</dbReference>
<dbReference type="HPA" id="ENSG00000111846">
    <property type="expression patterns" value="Tissue enhanced (prostate)"/>
</dbReference>
<dbReference type="MalaCards" id="GCNT2"/>
<dbReference type="MIM" id="110800">
    <property type="type" value="phenotype"/>
</dbReference>
<dbReference type="MIM" id="116700">
    <property type="type" value="phenotype"/>
</dbReference>
<dbReference type="MIM" id="600429">
    <property type="type" value="gene"/>
</dbReference>
<dbReference type="neXtProt" id="NX_Q8N0V5"/>
<dbReference type="OpenTargets" id="ENSG00000111846"/>
<dbReference type="Orphanet" id="98994">
    <property type="disease" value="Total early-onset cataract"/>
</dbReference>
<dbReference type="PharmGKB" id="PA169"/>
<dbReference type="VEuPathDB" id="HostDB:ENSG00000111846"/>
<dbReference type="eggNOG" id="KOG0799">
    <property type="taxonomic scope" value="Eukaryota"/>
</dbReference>
<dbReference type="GeneTree" id="ENSGT00940000156849"/>
<dbReference type="InParanoid" id="Q8N0V5"/>
<dbReference type="OMA" id="KTPVFLW"/>
<dbReference type="OrthoDB" id="2019572at2759"/>
<dbReference type="PAN-GO" id="Q8N0V5">
    <property type="GO annotations" value="2 GO annotations based on evolutionary models"/>
</dbReference>
<dbReference type="PhylomeDB" id="Q8N0V5"/>
<dbReference type="TreeFam" id="TF315534"/>
<dbReference type="BioCyc" id="MetaCyc:HS03475-MONOMER"/>
<dbReference type="BRENDA" id="2.4.1.150">
    <property type="organism ID" value="2681"/>
</dbReference>
<dbReference type="PathwayCommons" id="Q8N0V5"/>
<dbReference type="SignaLink" id="Q8N0V5"/>
<dbReference type="UniPathway" id="UPA00378"/>
<dbReference type="BioGRID-ORCS" id="2651">
    <property type="hits" value="18 hits in 1150 CRISPR screens"/>
</dbReference>
<dbReference type="ChiTaRS" id="GCNT2">
    <property type="organism name" value="human"/>
</dbReference>
<dbReference type="GeneWiki" id="GCNT2"/>
<dbReference type="GenomeRNAi" id="2651"/>
<dbReference type="Pharos" id="Q8N0V5">
    <property type="development level" value="Tbio"/>
</dbReference>
<dbReference type="PRO" id="PR:Q8N0V5"/>
<dbReference type="Proteomes" id="UP000005640">
    <property type="component" value="Chromosome 6"/>
</dbReference>
<dbReference type="RNAct" id="Q8N0V5">
    <property type="molecule type" value="protein"/>
</dbReference>
<dbReference type="Bgee" id="ENSG00000111846">
    <property type="expression patterns" value="Expressed in primordial germ cell in gonad and 108 other cell types or tissues"/>
</dbReference>
<dbReference type="ExpressionAtlas" id="Q8N0V5">
    <property type="expression patterns" value="baseline and differential"/>
</dbReference>
<dbReference type="GO" id="GO:0000139">
    <property type="term" value="C:Golgi membrane"/>
    <property type="evidence" value="ECO:0007669"/>
    <property type="project" value="UniProtKB-SubCell"/>
</dbReference>
<dbReference type="GO" id="GO:0016020">
    <property type="term" value="C:membrane"/>
    <property type="evidence" value="ECO:0000304"/>
    <property type="project" value="ProtInc"/>
</dbReference>
<dbReference type="GO" id="GO:0008375">
    <property type="term" value="F:acetylglucosaminyltransferase activity"/>
    <property type="evidence" value="ECO:0000318"/>
    <property type="project" value="GO_Central"/>
</dbReference>
<dbReference type="GO" id="GO:0008109">
    <property type="term" value="F:N-acetyllactosaminide beta-1,6-N-acetylglucosaminyltransferase activity"/>
    <property type="evidence" value="ECO:0000315"/>
    <property type="project" value="UniProtKB"/>
</dbReference>
<dbReference type="GO" id="GO:0006024">
    <property type="term" value="P:glycosaminoglycan biosynthetic process"/>
    <property type="evidence" value="ECO:0000304"/>
    <property type="project" value="ProtInc"/>
</dbReference>
<dbReference type="GO" id="GO:0036438">
    <property type="term" value="P:maintenance of lens transparency"/>
    <property type="evidence" value="ECO:0000315"/>
    <property type="project" value="UniProtKB"/>
</dbReference>
<dbReference type="GO" id="GO:0007275">
    <property type="term" value="P:multicellular organism development"/>
    <property type="evidence" value="ECO:0000304"/>
    <property type="project" value="ProtInc"/>
</dbReference>
<dbReference type="GO" id="GO:0010812">
    <property type="term" value="P:negative regulation of cell-substrate adhesion"/>
    <property type="evidence" value="ECO:0000315"/>
    <property type="project" value="UniProtKB"/>
</dbReference>
<dbReference type="GO" id="GO:0030335">
    <property type="term" value="P:positive regulation of cell migration"/>
    <property type="evidence" value="ECO:0000315"/>
    <property type="project" value="UniProtKB"/>
</dbReference>
<dbReference type="GO" id="GO:0008284">
    <property type="term" value="P:positive regulation of cell population proliferation"/>
    <property type="evidence" value="ECO:0000250"/>
    <property type="project" value="CAFA"/>
</dbReference>
<dbReference type="GO" id="GO:0010718">
    <property type="term" value="P:positive regulation of epithelial to mesenchymal transition"/>
    <property type="evidence" value="ECO:0000315"/>
    <property type="project" value="UniProtKB"/>
</dbReference>
<dbReference type="GO" id="GO:0070374">
    <property type="term" value="P:positive regulation of ERK1 and ERK2 cascade"/>
    <property type="evidence" value="ECO:0000315"/>
    <property type="project" value="UniProtKB"/>
</dbReference>
<dbReference type="GO" id="GO:0034116">
    <property type="term" value="P:positive regulation of heterotypic cell-cell adhesion"/>
    <property type="evidence" value="ECO:0000315"/>
    <property type="project" value="UniProtKB"/>
</dbReference>
<dbReference type="GO" id="GO:0051897">
    <property type="term" value="P:positive regulation of phosphatidylinositol 3-kinase/protein kinase B signal transduction"/>
    <property type="evidence" value="ECO:0000315"/>
    <property type="project" value="UniProtKB"/>
</dbReference>
<dbReference type="GO" id="GO:0010608">
    <property type="term" value="P:post-transcriptional regulation of gene expression"/>
    <property type="evidence" value="ECO:0000315"/>
    <property type="project" value="UniProtKB"/>
</dbReference>
<dbReference type="GO" id="GO:0006486">
    <property type="term" value="P:protein glycosylation"/>
    <property type="evidence" value="ECO:0000315"/>
    <property type="project" value="UniProtKB"/>
</dbReference>
<dbReference type="GO" id="GO:0007179">
    <property type="term" value="P:transforming growth factor beta receptor signaling pathway"/>
    <property type="evidence" value="ECO:0000315"/>
    <property type="project" value="UniProtKB"/>
</dbReference>
<dbReference type="InterPro" id="IPR003406">
    <property type="entry name" value="Glyco_trans_14"/>
</dbReference>
<dbReference type="PANTHER" id="PTHR19297">
    <property type="entry name" value="GLYCOSYLTRANSFERASE 14 FAMILY MEMBER"/>
    <property type="match status" value="1"/>
</dbReference>
<dbReference type="PANTHER" id="PTHR19297:SF190">
    <property type="entry name" value="N-ACETYLLACTOSAMINIDE BETA-1,6-N-ACETYLGLUCOSAMINYL-TRANSFERASE"/>
    <property type="match status" value="1"/>
</dbReference>
<dbReference type="Pfam" id="PF02485">
    <property type="entry name" value="Branch"/>
    <property type="match status" value="1"/>
</dbReference>
<gene>
    <name type="primary">GCNT2</name>
    <name type="synonym">GCNT5</name>
    <name type="synonym">II</name>
    <name type="synonym">NACGT1</name>
</gene>
<evidence type="ECO:0000250" key="1"/>
<evidence type="ECO:0000255" key="2"/>
<evidence type="ECO:0000269" key="3">
    <source>
    </source>
</evidence>
<evidence type="ECO:0000269" key="4">
    <source>
    </source>
</evidence>
<evidence type="ECO:0000269" key="5">
    <source>
    </source>
</evidence>
<evidence type="ECO:0000269" key="6">
    <source>
    </source>
</evidence>
<evidence type="ECO:0000269" key="7">
    <source>
    </source>
</evidence>
<evidence type="ECO:0000269" key="8">
    <source>
    </source>
</evidence>
<evidence type="ECO:0000269" key="9">
    <source>
    </source>
</evidence>
<evidence type="ECO:0000305" key="10"/>
<feature type="chain" id="PRO_0000395119" description="N-acetyllactosaminide beta-1,6-N-acetylglucosaminyl-transferase">
    <location>
        <begin position="1"/>
        <end position="402"/>
    </location>
</feature>
<feature type="topological domain" description="Cytoplasmic" evidence="2">
    <location>
        <begin position="1"/>
        <end position="7"/>
    </location>
</feature>
<feature type="transmembrane region" description="Helical; Signal-anchor for type II membrane protein" evidence="2">
    <location>
        <begin position="8"/>
        <end position="23"/>
    </location>
</feature>
<feature type="topological domain" description="Lumenal" evidence="2">
    <location>
        <begin position="24"/>
        <end position="400"/>
    </location>
</feature>
<feature type="glycosylation site" description="N-linked (GlcNAc...) asparagine" evidence="2">
    <location>
        <position position="41"/>
    </location>
</feature>
<feature type="splice variant" id="VSP_058347" description="In isoform C.">
    <original>MMGSWKHCLFSASLISALIFVFVYNTELWENKRFLRAALSNASLLAEACHQIFEGKVFYPTENALKTTLDEATCYEYMVRSHYVTETLSEEEAGFPLAYTVTIHKDFGTFERLFRAIYMPQNVYCVHLDQKATDAFKGAVKQLLSCFPNAFLASKKESVVYGGISRLQADLNCLEDLVASEVPWKYVINTCGQDFPLKTNREIVQYLKGFKGKNITPGVLPPDHAVGRTKYVHQELLNHKNSYVIKTTKLKTPPPHDMVIYFGTAYVALTRDFANFVLQDQLALDLLSWSKDTYSPDEHFWVTLNRIP</original>
    <variation>MNFWRYCFFAFTLLSVVIFVRFYSSQLSPPKSYEKLNSSSERYFRKTACNHALEKMPVFLWENILPSPLRSVPCKDYLTQNHYITSPLSEEEAAFPLAYVMVIHKDFDTFERLFRAIYMPQNVYCVHVDEKAPAEYKESVRQLLSCFQNAFIASKTESVVYAGISRLQADLNCLKDLVASEVPWKYVINTCGQDFPLKTNREIVQHLKGFKGKNITPGVLPPDHAIKRTKYVHQEHTDKGGFFVKNTNILKTSPPHQLTIYFGTAYVALTRDFVDFVLRDQRAIDLLQWSKDTYSPDEHFWVTLNRVS</variation>
    <location>
        <begin position="1"/>
        <end position="308"/>
    </location>
</feature>
<feature type="splice variant" id="VSP_058348" description="In isoform B.">
    <original>MMGSWKHCLFSASLISALIFVFVYNTELWENKRFLRAALSNASLLAEACHQIFEGKVFYPTENALKTTLDEATCYEYMVRSHYVTETLSEEEAGFPLAYTVTIHKDFGTFERLFRAIYMPQNVYCVHLDQKATDAFKGAVKQLLSCFPNAFLASKKESVVYGGISRLQADLNCLEDLVASEVPWKYVINTCGQDFPLKTNREIVQYLKGFKGKNITPGVLPPDHAVGRTKYVHQELLNHKNSYVIKTTKLKTPPPHDMVIYFGTAYVALTRDFANFVLQDQLALDLLSWSKDTY</original>
    <variation>MPLSMRYLFIISVSSVIIFIVFSVFNFGGDPSFQRLNISDPLRLTQVCTSFINGKTRFLWKNKLMIHEKSSCKEYLTQSHYITAPLSKEEADFPLAYIMVIHHHFDTFARLFRAIYMPQNIYCVHVDEKATTEFKDAVEQLLSCFPNAFLASKMEPVVYGGISRLQADLNCIRDLSAFEVSWKYVINTCGQDFPLKTNKEIVQYLKGFKGKNITPGVLPPAHAIGRTKYVHQEHLGKELSYVIRTTALKPPPPHNLTIYFGSAYVALSREFANFVLHDPRAVDLLQWSKDTF</variation>
    <location>
        <begin position="1"/>
        <end position="294"/>
    </location>
</feature>
<feature type="sequence variant" id="VAR_073827" description="Defines the adult i phenotype; dbSNP:rs137853339." evidence="4">
    <original>A</original>
    <variation>T</variation>
    <location>
        <position position="169"/>
    </location>
</feature>
<feature type="sequence variant" id="VAR_073828" description="Defines the adult i phenotype; dbSNP:rs137853340." evidence="4">
    <original>R</original>
    <variation>Q</variation>
    <location>
        <position position="228"/>
    </location>
</feature>
<feature type="sequence variant" id="VAR_073829" description="In CTRCT13; uncertain significance; dbSNP:rs56141211." evidence="3 7">
    <original>G</original>
    <variation>E</variation>
    <location>
        <position position="350"/>
    </location>
</feature>
<feature type="sequence variant" id="VAR_084818" description="In CTRCT13; uncertain significance." evidence="6">
    <original>F</original>
    <variation>S</variation>
    <location>
        <position position="364"/>
    </location>
</feature>
<feature type="sequence variant" id="VAR_073830" description="In CTRCT13; uncertain significance; dbSNP:rs55940927." evidence="3 7">
    <original>R</original>
    <variation>H</variation>
    <location>
        <position position="385"/>
    </location>
</feature>
<feature type="sequence conflict" description="In Ref. 3; AAM73866, 4; BAC66782, 6; CAI46081, 7; BAG36218, 9; EAW55259 and 10; AAI30525." evidence="10" ref="3 4 6 7 9 10">
    <original>D</original>
    <variation>E</variation>
    <location>
        <position position="272"/>
    </location>
</feature>
<accession>Q8N0V5</accession>
<accession>Q06430</accession>
<accession>Q5T4J1</accession>
<accession>Q5W0E9</accession>
<accession>Q6T5E5</accession>
<accession>Q8NFS9</accession>
<comment type="function">
    <text evidence="8 9">Branching enzyme that converts linear into branched poly-N-acetyllactosaminoglycans. Introduces the blood group I antigen during embryonic development. It is closely associated with the development and maturation of erythroid cells.</text>
</comment>
<comment type="function">
    <molecule>Isoform C</molecule>
    <text evidence="5">Determines the expression of the blood group I antigen in erythrocytes.</text>
</comment>
<comment type="catalytic activity">
    <reaction>
        <text>a beta-D-Gal-(1-&gt;4)-beta-D-GlcNAc-(1-&gt;3)-beta-D-Gal-(1-&gt;4)-beta-D-GlcNAc derivative + UDP-N-acetyl-alpha-D-glucosamine = a beta-D-Gal-(1-&gt;4)-beta-D-GlcNAc-(1-&gt;3)-[beta-D-GlcNAc-(1-&gt;6)]-beta-D-Gal-(1-&gt;4)-N-acetyl-beta-D-glucosaminyl derivative + UDP + H(+)</text>
        <dbReference type="Rhea" id="RHEA:54820"/>
        <dbReference type="ChEBI" id="CHEBI:15378"/>
        <dbReference type="ChEBI" id="CHEBI:57705"/>
        <dbReference type="ChEBI" id="CHEBI:58223"/>
        <dbReference type="ChEBI" id="CHEBI:138371"/>
        <dbReference type="ChEBI" id="CHEBI:138372"/>
        <dbReference type="EC" id="2.4.1.150"/>
    </reaction>
</comment>
<comment type="pathway">
    <text>Protein modification; protein glycosylation.</text>
</comment>
<comment type="interaction">
    <interactant intactId="EBI-21492685">
        <id>Q8N0V5</id>
    </interactant>
    <interactant intactId="EBI-8649725">
        <id>Q9BSE2</id>
        <label>TMEM79</label>
    </interactant>
    <organismsDiffer>false</organismsDiffer>
    <experiments>2</experiments>
</comment>
<comment type="interaction">
    <interactant intactId="EBI-17248158">
        <id>Q8N0V5-3</id>
    </interactant>
    <interactant intactId="EBI-12142257">
        <id>Q8TBE3</id>
        <label>FNDC9</label>
    </interactant>
    <organismsDiffer>false</organismsDiffer>
    <experiments>3</experiments>
</comment>
<comment type="subcellular location">
    <subcellularLocation>
        <location evidence="1">Golgi apparatus membrane</location>
        <topology evidence="1">Single-pass type II membrane protein</topology>
    </subcellularLocation>
</comment>
<comment type="alternative products">
    <event type="alternative splicing"/>
    <isoform>
        <id>Q8N0V5-1</id>
        <name>A</name>
        <name>IGnTA</name>
        <name>IGNT1</name>
        <sequence type="displayed"/>
    </isoform>
    <isoform>
        <id>Q8N0V5-2</id>
        <name>B</name>
        <name>IGnTB</name>
        <name>IGNT2</name>
        <sequence type="described" ref="VSP_058348"/>
    </isoform>
    <isoform>
        <id>Q8N0V5-3</id>
        <name>C</name>
        <name>IGnTC</name>
        <name>IGNT3</name>
        <sequence type="described" ref="VSP_058347"/>
    </isoform>
    <text>Isoforms A, B and C have different exons 1, but identical exons 2 and 3.</text>
</comment>
<comment type="tissue specificity">
    <molecule>Isoform B</molecule>
    <text evidence="4">Expressed in lens epithelium cells.</text>
</comment>
<comment type="tissue specificity">
    <molecule>Isoform C</molecule>
    <text evidence="5">Expressed in reticulocytes.</text>
</comment>
<comment type="developmental stage">
    <molecule>Isoform B</molecule>
    <text evidence="8">Expression increases dramatically during development and oncogenesis.</text>
</comment>
<comment type="polymorphism">
    <text evidence="4">GCNT2 is involved in determining the blood group I system (Ii) [MIM:110800]. The i (fetal) and I (adult) antigens are determined by linear and branched poly-N-acetyllactosaminoglycans, respectively. A replacement during development of i by I is dependent on the appearance of a beta-1,6-N-acetylglucosaminyltransferase, the I-branching enzyme. The expression of the blood group I antigen in erythrocytes is determined by isoform C of GCNT2.</text>
</comment>
<comment type="disease" evidence="3 6 7">
    <disease id="DI-03830">
        <name>Cataract 13, with adult i phenotype</name>
        <acronym>CTRCT13</acronym>
        <description>An opacification of the crystalline lens of the eye that frequently results in visual impairment or blindness. Opacities vary in morphology, are often confined to a portion of the lens, and may be static or progressive. In general, the more posteriorly located and dense an opacity, the greater the impact on visual function. CTRCT13 is associated with the rare adult i phenotype, in which adult red blood cells are rich in i antigen and contain low levels of I antigen.</description>
        <dbReference type="MIM" id="116700"/>
    </disease>
    <text>The disease is caused by variants affecting the gene represented in this entry.</text>
</comment>
<comment type="similarity">
    <text evidence="10">Belongs to the glycosyltransferase 14 family.</text>
</comment>
<comment type="online information" name="Functional Glycomics Gateway - GTase">
    <link uri="http://www.functionalglycomics.org/glycomics/molecule/jsp/glycoEnzyme/viewGlycoEnzyme.jsp?gbpId=gt_hum_548"/>
    <text>N-acetyllactosaminide beta-1,6-N-acetylglucosaminyl-transferase</text>
</comment>
<sequence>MMGSWKHCLFSASLISALIFVFVYNTELWENKRFLRAALSNASLLAEACHQIFEGKVFYPTENALKTTLDEATCYEYMVRSHYVTETLSEEEAGFPLAYTVTIHKDFGTFERLFRAIYMPQNVYCVHLDQKATDAFKGAVKQLLSCFPNAFLASKKESVVYGGISRLQADLNCLEDLVASEVPWKYVINTCGQDFPLKTNREIVQYLKGFKGKNITPGVLPPDHAVGRTKYVHQELLNHKNSYVIKTTKLKTPPPHDMVIYFGTAYVALTRDFANFVLQDQLALDLLSWSKDTYSPDEHFWVTLNRIPGVPGSMPNASWTGNLRAIKWSDMEDRHGGCHGHYVHGICIYGNGDLKWLVNSPSLFANKFELNTYPLTVECLELRHRERTLNQSETAIQPSWYF</sequence>
<keyword id="KW-0025">Alternative splicing</keyword>
<keyword id="KW-0898">Cataract</keyword>
<keyword id="KW-0225">Disease variant</keyword>
<keyword id="KW-0325">Glycoprotein</keyword>
<keyword id="KW-0328">Glycosyltransferase</keyword>
<keyword id="KW-0333">Golgi apparatus</keyword>
<keyword id="KW-0472">Membrane</keyword>
<keyword id="KW-1267">Proteomics identification</keyword>
<keyword id="KW-1185">Reference proteome</keyword>
<keyword id="KW-0735">Signal-anchor</keyword>
<keyword id="KW-0808">Transferase</keyword>
<keyword id="KW-0812">Transmembrane</keyword>
<keyword id="KW-1133">Transmembrane helix</keyword>
<organism>
    <name type="scientific">Homo sapiens</name>
    <name type="common">Human</name>
    <dbReference type="NCBI Taxonomy" id="9606"/>
    <lineage>
        <taxon>Eukaryota</taxon>
        <taxon>Metazoa</taxon>
        <taxon>Chordata</taxon>
        <taxon>Craniata</taxon>
        <taxon>Vertebrata</taxon>
        <taxon>Euteleostomi</taxon>
        <taxon>Mammalia</taxon>
        <taxon>Eutheria</taxon>
        <taxon>Euarchontoglires</taxon>
        <taxon>Primates</taxon>
        <taxon>Haplorrhini</taxon>
        <taxon>Catarrhini</taxon>
        <taxon>Hominidae</taxon>
        <taxon>Homo</taxon>
    </lineage>
</organism>
<proteinExistence type="evidence at protein level"/>
<reference key="1">
    <citation type="journal article" date="1993" name="Genes Dev.">
        <title>Expression of the developmental I antigen by a cloned human cDNA encoding a member of a beta-1,6-N-acetylglucosaminyltransferase gene family.</title>
        <authorList>
            <person name="Bierhuizen M.F.A."/>
            <person name="Mattei M.-G."/>
            <person name="Fukuda M."/>
        </authorList>
    </citation>
    <scope>NUCLEOTIDE SEQUENCE [MRNA] (ISOFORM B)</scope>
    <scope>FUNCTION</scope>
    <source>
        <tissue>Embryonic carcinoma</tissue>
    </source>
</reference>
<reference key="2">
    <citation type="journal article" date="1995" name="Glycobiology">
        <title>Genomic organization of core 2 and I branching beta-1,6-N-acetylglucosaminyltransferases. Implication for evolution of the beta-1,6-N-acetylglucosaminyltransferase gene family.</title>
        <authorList>
            <person name="Bierhuizen M.F.A."/>
            <person name="Maemura K."/>
            <person name="Kudo S."/>
            <person name="Fukuda M."/>
        </authorList>
    </citation>
    <scope>NUCLEOTIDE SEQUENCE [GENOMIC DNA] (ISOFORM B)</scope>
    <scope>FUNCTION</scope>
    <scope>DEVELOPMENTAL STAGE</scope>
    <source>
        <tissue>Placenta</tissue>
    </source>
</reference>
<reference key="3">
    <citation type="journal article" date="2003" name="Blood">
        <title>The molecular genetics of the human I locus and molecular background explain the partial association of the adult i phenotype with congenital cataracts.</title>
        <authorList>
            <person name="Yu L.C."/>
            <person name="Twu Y.C."/>
            <person name="Chou M.L."/>
            <person name="Reid M.E."/>
            <person name="Gray A.R."/>
            <person name="Moulds J.M."/>
            <person name="Chang C.Y."/>
            <person name="Lin M."/>
        </authorList>
    </citation>
    <scope>NUCLEOTIDE SEQUENCE [MRNA] (ISOFORMS A; B AND C)</scope>
    <scope>ALTERNATIVE SPLICING</scope>
    <scope>TISSUE SPECIFICITY</scope>
    <scope>VARIANTS THR-169 AND GLN-228</scope>
    <source>
        <tissue>Prostate</tissue>
    </source>
</reference>
<reference key="4">
    <citation type="journal article" date="2003" name="Blood">
        <title>A novel I-branching beta-1,6-N-acetylglucosaminyltransferase involved in human blood group I antigen expression.</title>
        <authorList>
            <person name="Inaba N."/>
            <person name="Hiruma T."/>
            <person name="Togayachi A."/>
            <person name="Iwasaki H."/>
            <person name="Wang X.H."/>
            <person name="Furukawa Y."/>
            <person name="Sumi R."/>
            <person name="Kudo T."/>
            <person name="Fujimura K."/>
            <person name="Iwai T."/>
            <person name="Gotoh M."/>
            <person name="Nakamura M."/>
            <person name="Narimatsu H."/>
        </authorList>
    </citation>
    <scope>NUCLEOTIDE SEQUENCE [MRNA] (ISOFORM C)</scope>
    <scope>ALTERNATIVE SPLICING</scope>
    <scope>FUNCTION (ISOFORM C)</scope>
    <scope>TISSUE SPECIFICITY</scope>
</reference>
<reference key="5">
    <citation type="journal article" date="2004" name="Genome Res.">
        <title>Multiple variable first exons: a mechanism for cell- and tissue-specific gene regulation.</title>
        <authorList>
            <person name="Zhang T."/>
            <person name="Haws P."/>
            <person name="Wu Q."/>
        </authorList>
    </citation>
    <scope>NUCLEOTIDE SEQUENCE [MRNA] (ISOFORM A)</scope>
</reference>
<reference key="6">
    <citation type="journal article" date="2001" name="Genome Res.">
        <title>Towards a catalog of human genes and proteins: sequencing and analysis of 500 novel complete protein coding human cDNAs.</title>
        <authorList>
            <person name="Wiemann S."/>
            <person name="Weil B."/>
            <person name="Wellenreuther R."/>
            <person name="Gassenhuber J."/>
            <person name="Glassl S."/>
            <person name="Ansorge W."/>
            <person name="Boecher M."/>
            <person name="Bloecker H."/>
            <person name="Bauersachs S."/>
            <person name="Blum H."/>
            <person name="Lauber J."/>
            <person name="Duesterhoeft A."/>
            <person name="Beyer A."/>
            <person name="Koehrer K."/>
            <person name="Strack N."/>
            <person name="Mewes H.-W."/>
            <person name="Ottenwaelder B."/>
            <person name="Obermaier B."/>
            <person name="Tampe J."/>
            <person name="Heubner D."/>
            <person name="Wambutt R."/>
            <person name="Korn B."/>
            <person name="Klein M."/>
            <person name="Poustka A."/>
        </authorList>
    </citation>
    <scope>NUCLEOTIDE SEQUENCE [LARGE SCALE MRNA] (ISOFORM C)</scope>
    <source>
        <tissue>Fetal skin</tissue>
    </source>
</reference>
<reference key="7">
    <citation type="journal article" date="2004" name="Nat. Genet.">
        <title>Complete sequencing and characterization of 21,243 full-length human cDNAs.</title>
        <authorList>
            <person name="Ota T."/>
            <person name="Suzuki Y."/>
            <person name="Nishikawa T."/>
            <person name="Otsuki T."/>
            <person name="Sugiyama T."/>
            <person name="Irie R."/>
            <person name="Wakamatsu A."/>
            <person name="Hayashi K."/>
            <person name="Sato H."/>
            <person name="Nagai K."/>
            <person name="Kimura K."/>
            <person name="Makita H."/>
            <person name="Sekine M."/>
            <person name="Obayashi M."/>
            <person name="Nishi T."/>
            <person name="Shibahara T."/>
            <person name="Tanaka T."/>
            <person name="Ishii S."/>
            <person name="Yamamoto J."/>
            <person name="Saito K."/>
            <person name="Kawai Y."/>
            <person name="Isono Y."/>
            <person name="Nakamura Y."/>
            <person name="Nagahari K."/>
            <person name="Murakami K."/>
            <person name="Yasuda T."/>
            <person name="Iwayanagi T."/>
            <person name="Wagatsuma M."/>
            <person name="Shiratori A."/>
            <person name="Sudo H."/>
            <person name="Hosoiri T."/>
            <person name="Kaku Y."/>
            <person name="Kodaira H."/>
            <person name="Kondo H."/>
            <person name="Sugawara M."/>
            <person name="Takahashi M."/>
            <person name="Kanda K."/>
            <person name="Yokoi T."/>
            <person name="Furuya T."/>
            <person name="Kikkawa E."/>
            <person name="Omura Y."/>
            <person name="Abe K."/>
            <person name="Kamihara K."/>
            <person name="Katsuta N."/>
            <person name="Sato K."/>
            <person name="Tanikawa M."/>
            <person name="Yamazaki M."/>
            <person name="Ninomiya K."/>
            <person name="Ishibashi T."/>
            <person name="Yamashita H."/>
            <person name="Murakawa K."/>
            <person name="Fujimori K."/>
            <person name="Tanai H."/>
            <person name="Kimata M."/>
            <person name="Watanabe M."/>
            <person name="Hiraoka S."/>
            <person name="Chiba Y."/>
            <person name="Ishida S."/>
            <person name="Ono Y."/>
            <person name="Takiguchi S."/>
            <person name="Watanabe S."/>
            <person name="Yosida M."/>
            <person name="Hotuta T."/>
            <person name="Kusano J."/>
            <person name="Kanehori K."/>
            <person name="Takahashi-Fujii A."/>
            <person name="Hara H."/>
            <person name="Tanase T.-O."/>
            <person name="Nomura Y."/>
            <person name="Togiya S."/>
            <person name="Komai F."/>
            <person name="Hara R."/>
            <person name="Takeuchi K."/>
            <person name="Arita M."/>
            <person name="Imose N."/>
            <person name="Musashino K."/>
            <person name="Yuuki H."/>
            <person name="Oshima A."/>
            <person name="Sasaki N."/>
            <person name="Aotsuka S."/>
            <person name="Yoshikawa Y."/>
            <person name="Matsunawa H."/>
            <person name="Ichihara T."/>
            <person name="Shiohata N."/>
            <person name="Sano S."/>
            <person name="Moriya S."/>
            <person name="Momiyama H."/>
            <person name="Satoh N."/>
            <person name="Takami S."/>
            <person name="Terashima Y."/>
            <person name="Suzuki O."/>
            <person name="Nakagawa S."/>
            <person name="Senoh A."/>
            <person name="Mizoguchi H."/>
            <person name="Goto Y."/>
            <person name="Shimizu F."/>
            <person name="Wakebe H."/>
            <person name="Hishigaki H."/>
            <person name="Watanabe T."/>
            <person name="Sugiyama A."/>
            <person name="Takemoto M."/>
            <person name="Kawakami B."/>
            <person name="Yamazaki M."/>
            <person name="Watanabe K."/>
            <person name="Kumagai A."/>
            <person name="Itakura S."/>
            <person name="Fukuzumi Y."/>
            <person name="Fujimori Y."/>
            <person name="Komiyama M."/>
            <person name="Tashiro H."/>
            <person name="Tanigami A."/>
            <person name="Fujiwara T."/>
            <person name="Ono T."/>
            <person name="Yamada K."/>
            <person name="Fujii Y."/>
            <person name="Ozaki K."/>
            <person name="Hirao M."/>
            <person name="Ohmori Y."/>
            <person name="Kawabata A."/>
            <person name="Hikiji T."/>
            <person name="Kobatake N."/>
            <person name="Inagaki H."/>
            <person name="Ikema Y."/>
            <person name="Okamoto S."/>
            <person name="Okitani R."/>
            <person name="Kawakami T."/>
            <person name="Noguchi S."/>
            <person name="Itoh T."/>
            <person name="Shigeta K."/>
            <person name="Senba T."/>
            <person name="Matsumura K."/>
            <person name="Nakajima Y."/>
            <person name="Mizuno T."/>
            <person name="Morinaga M."/>
            <person name="Sasaki M."/>
            <person name="Togashi T."/>
            <person name="Oyama M."/>
            <person name="Hata H."/>
            <person name="Watanabe M."/>
            <person name="Komatsu T."/>
            <person name="Mizushima-Sugano J."/>
            <person name="Satoh T."/>
            <person name="Shirai Y."/>
            <person name="Takahashi Y."/>
            <person name="Nakagawa K."/>
            <person name="Okumura K."/>
            <person name="Nagase T."/>
            <person name="Nomura N."/>
            <person name="Kikuchi H."/>
            <person name="Masuho Y."/>
            <person name="Yamashita R."/>
            <person name="Nakai K."/>
            <person name="Yada T."/>
            <person name="Nakamura Y."/>
            <person name="Ohara O."/>
            <person name="Isogai T."/>
            <person name="Sugano S."/>
        </authorList>
    </citation>
    <scope>NUCLEOTIDE SEQUENCE [LARGE SCALE MRNA] (ISOFORMS A; B AND C)</scope>
    <source>
        <tissue>Cerebellum</tissue>
    </source>
</reference>
<reference key="8">
    <citation type="journal article" date="2003" name="Nature">
        <title>The DNA sequence and analysis of human chromosome 6.</title>
        <authorList>
            <person name="Mungall A.J."/>
            <person name="Palmer S.A."/>
            <person name="Sims S.K."/>
            <person name="Edwards C.A."/>
            <person name="Ashurst J.L."/>
            <person name="Wilming L."/>
            <person name="Jones M.C."/>
            <person name="Horton R."/>
            <person name="Hunt S.E."/>
            <person name="Scott C.E."/>
            <person name="Gilbert J.G.R."/>
            <person name="Clamp M.E."/>
            <person name="Bethel G."/>
            <person name="Milne S."/>
            <person name="Ainscough R."/>
            <person name="Almeida J.P."/>
            <person name="Ambrose K.D."/>
            <person name="Andrews T.D."/>
            <person name="Ashwell R.I.S."/>
            <person name="Babbage A.K."/>
            <person name="Bagguley C.L."/>
            <person name="Bailey J."/>
            <person name="Banerjee R."/>
            <person name="Barker D.J."/>
            <person name="Barlow K.F."/>
            <person name="Bates K."/>
            <person name="Beare D.M."/>
            <person name="Beasley H."/>
            <person name="Beasley O."/>
            <person name="Bird C.P."/>
            <person name="Blakey S.E."/>
            <person name="Bray-Allen S."/>
            <person name="Brook J."/>
            <person name="Brown A.J."/>
            <person name="Brown J.Y."/>
            <person name="Burford D.C."/>
            <person name="Burrill W."/>
            <person name="Burton J."/>
            <person name="Carder C."/>
            <person name="Carter N.P."/>
            <person name="Chapman J.C."/>
            <person name="Clark S.Y."/>
            <person name="Clark G."/>
            <person name="Clee C.M."/>
            <person name="Clegg S."/>
            <person name="Cobley V."/>
            <person name="Collier R.E."/>
            <person name="Collins J.E."/>
            <person name="Colman L.K."/>
            <person name="Corby N.R."/>
            <person name="Coville G.J."/>
            <person name="Culley K.M."/>
            <person name="Dhami P."/>
            <person name="Davies J."/>
            <person name="Dunn M."/>
            <person name="Earthrowl M.E."/>
            <person name="Ellington A.E."/>
            <person name="Evans K.A."/>
            <person name="Faulkner L."/>
            <person name="Francis M.D."/>
            <person name="Frankish A."/>
            <person name="Frankland J."/>
            <person name="French L."/>
            <person name="Garner P."/>
            <person name="Garnett J."/>
            <person name="Ghori M.J."/>
            <person name="Gilby L.M."/>
            <person name="Gillson C.J."/>
            <person name="Glithero R.J."/>
            <person name="Grafham D.V."/>
            <person name="Grant M."/>
            <person name="Gribble S."/>
            <person name="Griffiths C."/>
            <person name="Griffiths M.N.D."/>
            <person name="Hall R."/>
            <person name="Halls K.S."/>
            <person name="Hammond S."/>
            <person name="Harley J.L."/>
            <person name="Hart E.A."/>
            <person name="Heath P.D."/>
            <person name="Heathcott R."/>
            <person name="Holmes S.J."/>
            <person name="Howden P.J."/>
            <person name="Howe K.L."/>
            <person name="Howell G.R."/>
            <person name="Huckle E."/>
            <person name="Humphray S.J."/>
            <person name="Humphries M.D."/>
            <person name="Hunt A.R."/>
            <person name="Johnson C.M."/>
            <person name="Joy A.A."/>
            <person name="Kay M."/>
            <person name="Keenan S.J."/>
            <person name="Kimberley A.M."/>
            <person name="King A."/>
            <person name="Laird G.K."/>
            <person name="Langford C."/>
            <person name="Lawlor S."/>
            <person name="Leongamornlert D.A."/>
            <person name="Leversha M."/>
            <person name="Lloyd C.R."/>
            <person name="Lloyd D.M."/>
            <person name="Loveland J.E."/>
            <person name="Lovell J."/>
            <person name="Martin S."/>
            <person name="Mashreghi-Mohammadi M."/>
            <person name="Maslen G.L."/>
            <person name="Matthews L."/>
            <person name="McCann O.T."/>
            <person name="McLaren S.J."/>
            <person name="McLay K."/>
            <person name="McMurray A."/>
            <person name="Moore M.J.F."/>
            <person name="Mullikin J.C."/>
            <person name="Niblett D."/>
            <person name="Nickerson T."/>
            <person name="Novik K.L."/>
            <person name="Oliver K."/>
            <person name="Overton-Larty E.K."/>
            <person name="Parker A."/>
            <person name="Patel R."/>
            <person name="Pearce A.V."/>
            <person name="Peck A.I."/>
            <person name="Phillimore B.J.C.T."/>
            <person name="Phillips S."/>
            <person name="Plumb R.W."/>
            <person name="Porter K.M."/>
            <person name="Ramsey Y."/>
            <person name="Ranby S.A."/>
            <person name="Rice C.M."/>
            <person name="Ross M.T."/>
            <person name="Searle S.M."/>
            <person name="Sehra H.K."/>
            <person name="Sheridan E."/>
            <person name="Skuce C.D."/>
            <person name="Smith S."/>
            <person name="Smith M."/>
            <person name="Spraggon L."/>
            <person name="Squares S.L."/>
            <person name="Steward C.A."/>
            <person name="Sycamore N."/>
            <person name="Tamlyn-Hall G."/>
            <person name="Tester J."/>
            <person name="Theaker A.J."/>
            <person name="Thomas D.W."/>
            <person name="Thorpe A."/>
            <person name="Tracey A."/>
            <person name="Tromans A."/>
            <person name="Tubby B."/>
            <person name="Wall M."/>
            <person name="Wallis J.M."/>
            <person name="West A.P."/>
            <person name="White S.S."/>
            <person name="Whitehead S.L."/>
            <person name="Whittaker H."/>
            <person name="Wild A."/>
            <person name="Willey D.J."/>
            <person name="Wilmer T.E."/>
            <person name="Wood J.M."/>
            <person name="Wray P.W."/>
            <person name="Wyatt J.C."/>
            <person name="Young L."/>
            <person name="Younger R.M."/>
            <person name="Bentley D.R."/>
            <person name="Coulson A."/>
            <person name="Durbin R.M."/>
            <person name="Hubbard T."/>
            <person name="Sulston J.E."/>
            <person name="Dunham I."/>
            <person name="Rogers J."/>
            <person name="Beck S."/>
        </authorList>
    </citation>
    <scope>NUCLEOTIDE SEQUENCE [LARGE SCALE GENOMIC DNA]</scope>
    <source>
        <tissue>Brain</tissue>
    </source>
</reference>
<reference key="9">
    <citation type="submission" date="2005-07" db="EMBL/GenBank/DDBJ databases">
        <authorList>
            <person name="Mural R.J."/>
            <person name="Istrail S."/>
            <person name="Sutton G."/>
            <person name="Florea L."/>
            <person name="Halpern A.L."/>
            <person name="Mobarry C.M."/>
            <person name="Lippert R."/>
            <person name="Walenz B."/>
            <person name="Shatkay H."/>
            <person name="Dew I."/>
            <person name="Miller J.R."/>
            <person name="Flanigan M.J."/>
            <person name="Edwards N.J."/>
            <person name="Bolanos R."/>
            <person name="Fasulo D."/>
            <person name="Halldorsson B.V."/>
            <person name="Hannenhalli S."/>
            <person name="Turner R."/>
            <person name="Yooseph S."/>
            <person name="Lu F."/>
            <person name="Nusskern D.R."/>
            <person name="Shue B.C."/>
            <person name="Zheng X.H."/>
            <person name="Zhong F."/>
            <person name="Delcher A.L."/>
            <person name="Huson D.H."/>
            <person name="Kravitz S.A."/>
            <person name="Mouchard L."/>
            <person name="Reinert K."/>
            <person name="Remington K.A."/>
            <person name="Clark A.G."/>
            <person name="Waterman M.S."/>
            <person name="Eichler E.E."/>
            <person name="Adams M.D."/>
            <person name="Hunkapiller M.W."/>
            <person name="Myers E.W."/>
            <person name="Venter J.C."/>
        </authorList>
    </citation>
    <scope>NUCLEOTIDE SEQUENCE [LARGE SCALE GENOMIC DNA]</scope>
</reference>
<reference key="10">
    <citation type="journal article" date="2004" name="Genome Res.">
        <title>The status, quality, and expansion of the NIH full-length cDNA project: the Mammalian Gene Collection (MGC).</title>
        <authorList>
            <consortium name="The MGC Project Team"/>
        </authorList>
    </citation>
    <scope>NUCLEOTIDE SEQUENCE [LARGE SCALE MRNA] (ISOFORMS B AND C)</scope>
    <source>
        <tissue>Lung</tissue>
    </source>
</reference>
<reference key="11">
    <citation type="journal article" date="2001" name="Blood">
        <title>Molecular basis of the adult i phenotype and the gene responsible for the expression of the human blood group I antigen.</title>
        <authorList>
            <person name="Yu L.C."/>
            <person name="Twu Y.C."/>
            <person name="Chang C.Y."/>
            <person name="Lin M."/>
        </authorList>
    </citation>
    <scope>INVOLVEMENT IN CTRCT13</scope>
    <scope>VARIANTS CTRCT13 GLU-350 AND HIS-385</scope>
</reference>
<reference key="12">
    <citation type="journal article" date="2017" name="G3 (Bethesda)">
        <title>High-Throughput Genetic Screening of 51 Pediatric Cataract Genes Identifies Causative Mutations in Inherited Pediatric Cataract in South Eastern Australia.</title>
        <authorList>
            <person name="Javadiyan S."/>
            <person name="Craig J.E."/>
            <person name="Souzeau E."/>
            <person name="Sharma S."/>
            <person name="Lower K.M."/>
            <person name="Mackey D.A."/>
            <person name="Staffieri S.E."/>
            <person name="Elder J.E."/>
            <person name="Taranath D."/>
            <person name="Straga T."/>
            <person name="Black J."/>
            <person name="Pater J."/>
            <person name="Casey T."/>
            <person name="Hewitt A.W."/>
            <person name="Burdon K.P."/>
        </authorList>
    </citation>
    <scope>VARIANT CTRCT13 SER-364</scope>
</reference>
<reference key="13">
    <citation type="journal article" date="2018" name="Orphanet J. Rare Dis.">
        <title>Clinical and genetic characteristics of Chinese patients with familial or sporadic pediatric cataract.</title>
        <authorList>
            <person name="Li J."/>
            <person name="Leng Y."/>
            <person name="Han S."/>
            <person name="Yan L."/>
            <person name="Lu C."/>
            <person name="Luo Y."/>
            <person name="Zhang X."/>
            <person name="Cao L."/>
        </authorList>
    </citation>
    <scope>VARIANTS CTRCT13 GLU-350 AND HIS-385</scope>
</reference>
<protein>
    <recommendedName>
        <fullName evidence="10">N-acetyllactosaminide beta-1,6-N-acetylglucosaminyl-transferase</fullName>
        <shortName>N-acetylglucosaminyltransferase</shortName>
        <ecNumber>2.4.1.150</ecNumber>
    </recommendedName>
    <alternativeName>
        <fullName>I-branching enzyme</fullName>
    </alternativeName>
    <alternativeName>
        <fullName>IGNT</fullName>
    </alternativeName>
</protein>
<name>GNT2A_HUMAN</name>